<feature type="chain" id="PRO_0000030272" description="Protein RecA, 1st part">
    <location>
        <begin position="1"/>
        <end position="251"/>
    </location>
</feature>
<feature type="chain" id="PRO_0000030273" description="Endonuclease PI-MboI">
    <location>
        <begin position="252"/>
        <end position="691"/>
    </location>
</feature>
<feature type="chain" id="PRO_0000030274" description="Protein RecA, 2nd part">
    <location>
        <begin position="692"/>
        <end position="790"/>
    </location>
</feature>
<feature type="domain" description="DOD-type homing endonuclease">
    <location>
        <begin position="366"/>
        <end position="508"/>
    </location>
</feature>
<feature type="binding site" evidence="1">
    <location>
        <begin position="67"/>
        <end position="74"/>
    </location>
    <ligand>
        <name>ATP</name>
        <dbReference type="ChEBI" id="CHEBI:30616"/>
    </ligand>
</feature>
<reference key="1">
    <citation type="journal article" date="2003" name="Proc. Natl. Acad. Sci. U.S.A.">
        <title>The complete genome sequence of Mycobacterium bovis.</title>
        <authorList>
            <person name="Garnier T."/>
            <person name="Eiglmeier K."/>
            <person name="Camus J.-C."/>
            <person name="Medina N."/>
            <person name="Mansoor H."/>
            <person name="Pryor M."/>
            <person name="Duthoy S."/>
            <person name="Grondin S."/>
            <person name="Lacroix C."/>
            <person name="Monsempe C."/>
            <person name="Simon S."/>
            <person name="Harris B."/>
            <person name="Atkin R."/>
            <person name="Doggett J."/>
            <person name="Mayes R."/>
            <person name="Keating L."/>
            <person name="Wheeler P.R."/>
            <person name="Parkhill J."/>
            <person name="Barrell B.G."/>
            <person name="Cole S.T."/>
            <person name="Gordon S.V."/>
            <person name="Hewinson R.G."/>
        </authorList>
    </citation>
    <scope>NUCLEOTIDE SEQUENCE [LARGE SCALE GENOMIC DNA]</scope>
    <source>
        <strain>ATCC BAA-935 / AF2122/97</strain>
    </source>
</reference>
<reference key="2">
    <citation type="journal article" date="2017" name="Genome Announc.">
        <title>Updated reference genome sequence and annotation of Mycobacterium bovis AF2122/97.</title>
        <authorList>
            <person name="Malone K.M."/>
            <person name="Farrell D."/>
            <person name="Stuber T.P."/>
            <person name="Schubert O.T."/>
            <person name="Aebersold R."/>
            <person name="Robbe-Austerman S."/>
            <person name="Gordon S.V."/>
        </authorList>
    </citation>
    <scope>NUCLEOTIDE SEQUENCE [LARGE SCALE GENOMIC DNA]</scope>
    <scope>GENOME REANNOTATION</scope>
    <source>
        <strain>ATCC BAA-935 / AF2122/97</strain>
    </source>
</reference>
<evidence type="ECO:0000250" key="1"/>
<evidence type="ECO:0000305" key="2"/>
<name>RECA_MYCBO</name>
<organism>
    <name type="scientific">Mycobacterium bovis (strain ATCC BAA-935 / AF2122/97)</name>
    <dbReference type="NCBI Taxonomy" id="233413"/>
    <lineage>
        <taxon>Bacteria</taxon>
        <taxon>Bacillati</taxon>
        <taxon>Actinomycetota</taxon>
        <taxon>Actinomycetes</taxon>
        <taxon>Mycobacteriales</taxon>
        <taxon>Mycobacteriaceae</taxon>
        <taxon>Mycobacterium</taxon>
        <taxon>Mycobacterium tuberculosis complex</taxon>
    </lineage>
</organism>
<comment type="function">
    <text evidence="1">Can catalyze the hydrolysis of ATP in the presence of single-stranded DNA, the ATP-dependent uptake of single-stranded DNA by duplex DNA, and the ATP-dependent hybridization of homologous single-stranded DNAs. It interacts with LexA causing its activation and leading to its autocatalytic cleavage (By similarity).</text>
</comment>
<comment type="function">
    <text evidence="1">PI-MboI is an endonuclease.</text>
</comment>
<comment type="subcellular location">
    <subcellularLocation>
        <location evidence="1">Cytoplasm</location>
    </subcellularLocation>
</comment>
<comment type="PTM">
    <text evidence="1">This protein undergoes a protein self splicing that involves a post-translational excision of the intervening region (intein) followed by peptide ligation.</text>
</comment>
<comment type="similarity">
    <text evidence="2">Belongs to the RecA family.</text>
</comment>
<accession>P0A5U5</accession>
<accession>A0A1R3Y236</accession>
<accession>O34519</accession>
<accession>P26345</accession>
<accession>X2BLS4</accession>
<keyword id="KW-0067">ATP-binding</keyword>
<keyword id="KW-0068">Autocatalytic cleavage</keyword>
<keyword id="KW-0963">Cytoplasm</keyword>
<keyword id="KW-0227">DNA damage</keyword>
<keyword id="KW-0233">DNA recombination</keyword>
<keyword id="KW-0234">DNA repair</keyword>
<keyword id="KW-0238">DNA-binding</keyword>
<keyword id="KW-0255">Endonuclease</keyword>
<keyword id="KW-0378">Hydrolase</keyword>
<keyword id="KW-0404">Intron homing</keyword>
<keyword id="KW-0540">Nuclease</keyword>
<keyword id="KW-0547">Nucleotide-binding</keyword>
<keyword id="KW-0651">Protein splicing</keyword>
<keyword id="KW-1185">Reference proteome</keyword>
<keyword id="KW-0742">SOS response</keyword>
<proteinExistence type="inferred from homology"/>
<gene>
    <name type="primary">recA</name>
    <name type="ordered locus">BQ2027_MB2756C</name>
</gene>
<protein>
    <recommendedName>
        <fullName>Protein RecA</fullName>
    </recommendedName>
    <alternativeName>
        <fullName>Recombinase A</fullName>
    </alternativeName>
    <component>
        <recommendedName>
            <fullName>Endonuclease PI-MboI</fullName>
            <ecNumber>3.1.-.-</ecNumber>
        </recommendedName>
        <alternativeName>
            <fullName>Mbo RecA intein</fullName>
        </alternativeName>
    </component>
</protein>
<dbReference type="EC" id="3.1.-.-"/>
<dbReference type="EMBL" id="LT708304">
    <property type="protein sequence ID" value="SIU01374.1"/>
    <property type="molecule type" value="Genomic_DNA"/>
</dbReference>
<dbReference type="RefSeq" id="NP_856402.1">
    <property type="nucleotide sequence ID" value="NC_002945.3"/>
</dbReference>
<dbReference type="RefSeq" id="WP_003414006.1">
    <property type="nucleotide sequence ID" value="NC_002945.4"/>
</dbReference>
<dbReference type="SMR" id="P0A5U5"/>
<dbReference type="MEROPS" id="N10.009"/>
<dbReference type="KEGG" id="mbo:BQ2027_MB2756C"/>
<dbReference type="PATRIC" id="fig|233413.5.peg.3019"/>
<dbReference type="Proteomes" id="UP000001419">
    <property type="component" value="Chromosome"/>
</dbReference>
<dbReference type="GO" id="GO:0005829">
    <property type="term" value="C:cytosol"/>
    <property type="evidence" value="ECO:0007669"/>
    <property type="project" value="TreeGrafter"/>
</dbReference>
<dbReference type="GO" id="GO:0005524">
    <property type="term" value="F:ATP binding"/>
    <property type="evidence" value="ECO:0007669"/>
    <property type="project" value="UniProtKB-UniRule"/>
</dbReference>
<dbReference type="GO" id="GO:0016887">
    <property type="term" value="F:ATP hydrolysis activity"/>
    <property type="evidence" value="ECO:0007669"/>
    <property type="project" value="InterPro"/>
</dbReference>
<dbReference type="GO" id="GO:0140664">
    <property type="term" value="F:ATP-dependent DNA damage sensor activity"/>
    <property type="evidence" value="ECO:0007669"/>
    <property type="project" value="InterPro"/>
</dbReference>
<dbReference type="GO" id="GO:0003684">
    <property type="term" value="F:damaged DNA binding"/>
    <property type="evidence" value="ECO:0007669"/>
    <property type="project" value="UniProtKB-UniRule"/>
</dbReference>
<dbReference type="GO" id="GO:0004519">
    <property type="term" value="F:endonuclease activity"/>
    <property type="evidence" value="ECO:0007669"/>
    <property type="project" value="UniProtKB-KW"/>
</dbReference>
<dbReference type="GO" id="GO:0003697">
    <property type="term" value="F:single-stranded DNA binding"/>
    <property type="evidence" value="ECO:0007669"/>
    <property type="project" value="UniProtKB-UniRule"/>
</dbReference>
<dbReference type="GO" id="GO:0006281">
    <property type="term" value="P:DNA repair"/>
    <property type="evidence" value="ECO:0007669"/>
    <property type="project" value="UniProtKB-UniRule"/>
</dbReference>
<dbReference type="GO" id="GO:0016539">
    <property type="term" value="P:intein-mediated protein splicing"/>
    <property type="evidence" value="ECO:0007669"/>
    <property type="project" value="InterPro"/>
</dbReference>
<dbReference type="GO" id="GO:0006314">
    <property type="term" value="P:intron homing"/>
    <property type="evidence" value="ECO:0007669"/>
    <property type="project" value="UniProtKB-KW"/>
</dbReference>
<dbReference type="GO" id="GO:0009432">
    <property type="term" value="P:SOS response"/>
    <property type="evidence" value="ECO:0007669"/>
    <property type="project" value="UniProtKB-UniRule"/>
</dbReference>
<dbReference type="CDD" id="cd00081">
    <property type="entry name" value="Hint"/>
    <property type="match status" value="1"/>
</dbReference>
<dbReference type="CDD" id="cd00983">
    <property type="entry name" value="RecA"/>
    <property type="match status" value="1"/>
</dbReference>
<dbReference type="FunFam" id="2.170.16.10:FF:000007">
    <property type="entry name" value="Protein RecA"/>
    <property type="match status" value="1"/>
</dbReference>
<dbReference type="FunFam" id="3.10.28.10:FF:000013">
    <property type="entry name" value="Protein RecA"/>
    <property type="match status" value="1"/>
</dbReference>
<dbReference type="FunFam" id="3.30.250.10:FF:000001">
    <property type="entry name" value="Protein RecA"/>
    <property type="match status" value="1"/>
</dbReference>
<dbReference type="FunFam" id="3.40.50.300:FF:002436">
    <property type="entry name" value="Protein RecA"/>
    <property type="match status" value="1"/>
</dbReference>
<dbReference type="Gene3D" id="2.170.16.10">
    <property type="entry name" value="Hedgehog/Intein (Hint) domain"/>
    <property type="match status" value="2"/>
</dbReference>
<dbReference type="Gene3D" id="3.10.28.10">
    <property type="entry name" value="Homing endonucleases"/>
    <property type="match status" value="1"/>
</dbReference>
<dbReference type="Gene3D" id="3.40.50.300">
    <property type="entry name" value="P-loop containing nucleotide triphosphate hydrolases"/>
    <property type="match status" value="1"/>
</dbReference>
<dbReference type="Gene3D" id="3.30.250.10">
    <property type="entry name" value="RecA protein, C-terminal domain"/>
    <property type="match status" value="1"/>
</dbReference>
<dbReference type="HAMAP" id="MF_00268">
    <property type="entry name" value="RecA"/>
    <property type="match status" value="1"/>
</dbReference>
<dbReference type="InterPro" id="IPR003593">
    <property type="entry name" value="AAA+_ATPase"/>
</dbReference>
<dbReference type="InterPro" id="IPR013765">
    <property type="entry name" value="DNA_recomb/repair_RecA"/>
</dbReference>
<dbReference type="InterPro" id="IPR020584">
    <property type="entry name" value="DNA_recomb/repair_RecA_CS"/>
</dbReference>
<dbReference type="InterPro" id="IPR003586">
    <property type="entry name" value="Hint_dom_C"/>
</dbReference>
<dbReference type="InterPro" id="IPR003587">
    <property type="entry name" value="Hint_dom_N"/>
</dbReference>
<dbReference type="InterPro" id="IPR036844">
    <property type="entry name" value="Hint_dom_sf"/>
</dbReference>
<dbReference type="InterPro" id="IPR027434">
    <property type="entry name" value="Homing_endonucl"/>
</dbReference>
<dbReference type="InterPro" id="IPR006142">
    <property type="entry name" value="INTEIN"/>
</dbReference>
<dbReference type="InterPro" id="IPR030934">
    <property type="entry name" value="Intein_C"/>
</dbReference>
<dbReference type="InterPro" id="IPR004042">
    <property type="entry name" value="Intein_endonuc_central"/>
</dbReference>
<dbReference type="InterPro" id="IPR006141">
    <property type="entry name" value="Intein_N"/>
</dbReference>
<dbReference type="InterPro" id="IPR004860">
    <property type="entry name" value="LAGLIDADG_dom"/>
</dbReference>
<dbReference type="InterPro" id="IPR027417">
    <property type="entry name" value="P-loop_NTPase"/>
</dbReference>
<dbReference type="InterPro" id="IPR049261">
    <property type="entry name" value="RecA-like_C"/>
</dbReference>
<dbReference type="InterPro" id="IPR049428">
    <property type="entry name" value="RecA-like_N"/>
</dbReference>
<dbReference type="InterPro" id="IPR020588">
    <property type="entry name" value="RecA_ATP-bd"/>
</dbReference>
<dbReference type="InterPro" id="IPR023400">
    <property type="entry name" value="RecA_C_sf"/>
</dbReference>
<dbReference type="InterPro" id="IPR020587">
    <property type="entry name" value="RecA_monomer-monomer_interface"/>
</dbReference>
<dbReference type="NCBIfam" id="TIGR01443">
    <property type="entry name" value="intein_Cterm"/>
    <property type="match status" value="1"/>
</dbReference>
<dbReference type="NCBIfam" id="TIGR01445">
    <property type="entry name" value="intein_Nterm"/>
    <property type="match status" value="1"/>
</dbReference>
<dbReference type="NCBIfam" id="NF007072">
    <property type="entry name" value="PRK09519.1"/>
    <property type="match status" value="1"/>
</dbReference>
<dbReference type="NCBIfam" id="TIGR02012">
    <property type="entry name" value="tigrfam_recA"/>
    <property type="match status" value="1"/>
</dbReference>
<dbReference type="PANTHER" id="PTHR45900:SF1">
    <property type="entry name" value="MITOCHONDRIAL DNA REPAIR PROTEIN RECA HOMOLOG-RELATED"/>
    <property type="match status" value="1"/>
</dbReference>
<dbReference type="PANTHER" id="PTHR45900">
    <property type="entry name" value="RECA"/>
    <property type="match status" value="1"/>
</dbReference>
<dbReference type="Pfam" id="PF14890">
    <property type="entry name" value="Intein_splicing"/>
    <property type="match status" value="1"/>
</dbReference>
<dbReference type="Pfam" id="PF14528">
    <property type="entry name" value="LAGLIDADG_3"/>
    <property type="match status" value="1"/>
</dbReference>
<dbReference type="Pfam" id="PF00154">
    <property type="entry name" value="RecA"/>
    <property type="match status" value="1"/>
</dbReference>
<dbReference type="Pfam" id="PF21096">
    <property type="entry name" value="RecA_C"/>
    <property type="match status" value="1"/>
</dbReference>
<dbReference type="PRINTS" id="PR00379">
    <property type="entry name" value="INTEIN"/>
</dbReference>
<dbReference type="PRINTS" id="PR00142">
    <property type="entry name" value="RECA"/>
</dbReference>
<dbReference type="SMART" id="SM00382">
    <property type="entry name" value="AAA"/>
    <property type="match status" value="1"/>
</dbReference>
<dbReference type="SMART" id="SM00305">
    <property type="entry name" value="HintC"/>
    <property type="match status" value="1"/>
</dbReference>
<dbReference type="SMART" id="SM00306">
    <property type="entry name" value="HintN"/>
    <property type="match status" value="1"/>
</dbReference>
<dbReference type="SUPFAM" id="SSF51294">
    <property type="entry name" value="Hedgehog/intein (Hint) domain"/>
    <property type="match status" value="1"/>
</dbReference>
<dbReference type="SUPFAM" id="SSF55608">
    <property type="entry name" value="Homing endonucleases"/>
    <property type="match status" value="1"/>
</dbReference>
<dbReference type="SUPFAM" id="SSF52540">
    <property type="entry name" value="P-loop containing nucleoside triphosphate hydrolases"/>
    <property type="match status" value="1"/>
</dbReference>
<dbReference type="SUPFAM" id="SSF54752">
    <property type="entry name" value="RecA protein, C-terminal domain"/>
    <property type="match status" value="1"/>
</dbReference>
<dbReference type="PROSITE" id="PS50818">
    <property type="entry name" value="INTEIN_C_TER"/>
    <property type="match status" value="1"/>
</dbReference>
<dbReference type="PROSITE" id="PS50819">
    <property type="entry name" value="INTEIN_ENDONUCLEASE"/>
    <property type="match status" value="1"/>
</dbReference>
<dbReference type="PROSITE" id="PS50817">
    <property type="entry name" value="INTEIN_N_TER"/>
    <property type="match status" value="1"/>
</dbReference>
<dbReference type="PROSITE" id="PS00321">
    <property type="entry name" value="RECA_1"/>
    <property type="match status" value="1"/>
</dbReference>
<dbReference type="PROSITE" id="PS50162">
    <property type="entry name" value="RECA_2"/>
    <property type="match status" value="1"/>
</dbReference>
<dbReference type="PROSITE" id="PS50163">
    <property type="entry name" value="RECA_3"/>
    <property type="match status" value="2"/>
</dbReference>
<sequence>MTQTPDREKALELAVAQIEKSYGKGSVMRLGDEARQPISVIPTGSIALDVALGIGGLPRGRVIEIYGPESSGKTTVALHAVANAQAAGGVAAFIDAEHALDPDYAKKLGVDTDSLLVSQPDTGEQALEIADMLIRSGALDIVVIDSVAALVPRAELEGEMGDSHVGLQARLMSQALRKMTGALNNSGTTAIFINQLRDKIGVMFGSPETTTGGKALKFYASVRMDVRRVETLKDGTNAVGNRTRVKVVKNKCLAEGTRIFDPVTGTTHRIEDVVDGRKPIHVVAAAKDGTLHARPVVSWFDQGTRDVIGLRIAGGAIVWATPDHKVLTEYGWRAAGELRKGDRVAQPRRFDGFGDSAPIPADHARLLGYLIGDGRDGWVGGKTPINFINVQRALIDDVTRIAATLGCAAHPQGRISLAIAHRPGERNGVADLCQQAGIYGKLAWEKTIPNWFFEPDIAADIVGNLLFGLFESDGWVSREQTGALRVGYTTTSEQLAHQIHWLLLRFGVGSTVRDYDPTQKRPSIVNGRRIQSKRQVFEVRISGMDNVTAFAESVPMWGPRGAALIQAIPEATQGRRRGSQATYLAAEMTDAVLNYLDERGVTAQEAAAMIGVASGDPRGGMKQVLGASRLRRDRVQALADALDDKFLHDMLAEELRYSVIREVLPTRRARTFDLEVEELHTLVAEGVVVHNCSPPFKQAEFDILYGKGISREGSLIDMGVDQGLIRKSGAWFTYEGEQLGQGKENARNFLVENADVADEIEKKIKEKLGIGAVVTDDPSNDGVLPAPVDF</sequence>